<dbReference type="EC" id="1.1.1.27" evidence="2"/>
<dbReference type="EMBL" id="AF079533">
    <property type="protein sequence ID" value="AAC31198.1"/>
    <property type="molecule type" value="mRNA"/>
</dbReference>
<dbReference type="SMR" id="P69084"/>
<dbReference type="UniPathway" id="UPA00554">
    <property type="reaction ID" value="UER00611"/>
</dbReference>
<dbReference type="GO" id="GO:0005737">
    <property type="term" value="C:cytoplasm"/>
    <property type="evidence" value="ECO:0007669"/>
    <property type="project" value="UniProtKB-SubCell"/>
</dbReference>
<dbReference type="GO" id="GO:0004459">
    <property type="term" value="F:L-lactate dehydrogenase activity"/>
    <property type="evidence" value="ECO:0007669"/>
    <property type="project" value="UniProtKB-EC"/>
</dbReference>
<dbReference type="GO" id="GO:0006089">
    <property type="term" value="P:lactate metabolic process"/>
    <property type="evidence" value="ECO:0007669"/>
    <property type="project" value="TreeGrafter"/>
</dbReference>
<dbReference type="CDD" id="cd05293">
    <property type="entry name" value="LDH_1"/>
    <property type="match status" value="1"/>
</dbReference>
<dbReference type="FunFam" id="3.40.50.720:FF:000029">
    <property type="entry name" value="L-lactate dehydrogenase A chain"/>
    <property type="match status" value="1"/>
</dbReference>
<dbReference type="FunFam" id="3.90.110.10:FF:000003">
    <property type="entry name" value="L-lactate dehydrogenase A chain"/>
    <property type="match status" value="1"/>
</dbReference>
<dbReference type="Gene3D" id="3.90.110.10">
    <property type="entry name" value="Lactate dehydrogenase/glycoside hydrolase, family 4, C-terminal"/>
    <property type="match status" value="1"/>
</dbReference>
<dbReference type="Gene3D" id="3.40.50.720">
    <property type="entry name" value="NAD(P)-binding Rossmann-like Domain"/>
    <property type="match status" value="1"/>
</dbReference>
<dbReference type="HAMAP" id="MF_00488">
    <property type="entry name" value="Lactate_dehydrog"/>
    <property type="match status" value="1"/>
</dbReference>
<dbReference type="InterPro" id="IPR001557">
    <property type="entry name" value="L-lactate/malate_DH"/>
</dbReference>
<dbReference type="InterPro" id="IPR011304">
    <property type="entry name" value="L-lactate_DH"/>
</dbReference>
<dbReference type="InterPro" id="IPR018177">
    <property type="entry name" value="L-lactate_DH_AS"/>
</dbReference>
<dbReference type="InterPro" id="IPR022383">
    <property type="entry name" value="Lactate/malate_DH_C"/>
</dbReference>
<dbReference type="InterPro" id="IPR001236">
    <property type="entry name" value="Lactate/malate_DH_N"/>
</dbReference>
<dbReference type="InterPro" id="IPR015955">
    <property type="entry name" value="Lactate_DH/Glyco_Ohase_4_C"/>
</dbReference>
<dbReference type="InterPro" id="IPR036291">
    <property type="entry name" value="NAD(P)-bd_dom_sf"/>
</dbReference>
<dbReference type="NCBIfam" id="TIGR01771">
    <property type="entry name" value="L-LDH-NAD"/>
    <property type="match status" value="1"/>
</dbReference>
<dbReference type="PANTHER" id="PTHR43128">
    <property type="entry name" value="L-2-HYDROXYCARBOXYLATE DEHYDROGENASE (NAD(P)(+))"/>
    <property type="match status" value="1"/>
</dbReference>
<dbReference type="PANTHER" id="PTHR43128:SF10">
    <property type="entry name" value="L-LACTATE DEHYDROGENASE A CHAIN"/>
    <property type="match status" value="1"/>
</dbReference>
<dbReference type="Pfam" id="PF02866">
    <property type="entry name" value="Ldh_1_C"/>
    <property type="match status" value="1"/>
</dbReference>
<dbReference type="Pfam" id="PF00056">
    <property type="entry name" value="Ldh_1_N"/>
    <property type="match status" value="1"/>
</dbReference>
<dbReference type="PIRSF" id="PIRSF000102">
    <property type="entry name" value="Lac_mal_DH"/>
    <property type="match status" value="1"/>
</dbReference>
<dbReference type="PRINTS" id="PR00086">
    <property type="entry name" value="LLDHDRGNASE"/>
</dbReference>
<dbReference type="SUPFAM" id="SSF56327">
    <property type="entry name" value="LDH C-terminal domain-like"/>
    <property type="match status" value="1"/>
</dbReference>
<dbReference type="SUPFAM" id="SSF51735">
    <property type="entry name" value="NAD(P)-binding Rossmann-fold domains"/>
    <property type="match status" value="1"/>
</dbReference>
<dbReference type="PROSITE" id="PS00064">
    <property type="entry name" value="L_LDH"/>
    <property type="match status" value="1"/>
</dbReference>
<proteinExistence type="evidence at transcript level"/>
<feature type="initiator methionine" description="Removed" evidence="1">
    <location>
        <position position="1"/>
    </location>
</feature>
<feature type="chain" id="PRO_0000168440" description="L-lactate dehydrogenase A chain">
    <location>
        <begin position="2"/>
        <end position="332"/>
    </location>
</feature>
<feature type="active site" description="Proton acceptor" evidence="1">
    <location>
        <position position="193"/>
    </location>
</feature>
<feature type="binding site" evidence="1">
    <location>
        <begin position="29"/>
        <end position="57"/>
    </location>
    <ligand>
        <name>NAD(+)</name>
        <dbReference type="ChEBI" id="CHEBI:57540"/>
    </ligand>
</feature>
<feature type="binding site" evidence="1">
    <location>
        <position position="99"/>
    </location>
    <ligand>
        <name>NAD(+)</name>
        <dbReference type="ChEBI" id="CHEBI:57540"/>
    </ligand>
</feature>
<feature type="binding site" evidence="1">
    <location>
        <position position="106"/>
    </location>
    <ligand>
        <name>substrate</name>
    </ligand>
</feature>
<feature type="binding site" evidence="1">
    <location>
        <position position="138"/>
    </location>
    <ligand>
        <name>NAD(+)</name>
        <dbReference type="ChEBI" id="CHEBI:57540"/>
    </ligand>
</feature>
<feature type="binding site" evidence="1">
    <location>
        <position position="138"/>
    </location>
    <ligand>
        <name>substrate</name>
    </ligand>
</feature>
<feature type="binding site" evidence="1">
    <location>
        <position position="169"/>
    </location>
    <ligand>
        <name>substrate</name>
    </ligand>
</feature>
<feature type="binding site" evidence="1">
    <location>
        <position position="248"/>
    </location>
    <ligand>
        <name>substrate</name>
    </ligand>
</feature>
<keyword id="KW-0963">Cytoplasm</keyword>
<keyword id="KW-0520">NAD</keyword>
<keyword id="KW-0560">Oxidoreductase</keyword>
<organism>
    <name type="scientific">Gillichthys seta</name>
    <name type="common">Shortjaw mudsucker</name>
    <dbReference type="NCBI Taxonomy" id="79683"/>
    <lineage>
        <taxon>Eukaryota</taxon>
        <taxon>Metazoa</taxon>
        <taxon>Chordata</taxon>
        <taxon>Craniata</taxon>
        <taxon>Vertebrata</taxon>
        <taxon>Euteleostomi</taxon>
        <taxon>Actinopterygii</taxon>
        <taxon>Neopterygii</taxon>
        <taxon>Teleostei</taxon>
        <taxon>Neoteleostei</taxon>
        <taxon>Acanthomorphata</taxon>
        <taxon>Gobiaria</taxon>
        <taxon>Gobiiformes</taxon>
        <taxon>Gobioidei</taxon>
        <taxon>Gobiidae</taxon>
        <taxon>Gobionellinae</taxon>
        <taxon>Gillichthys</taxon>
    </lineage>
</organism>
<protein>
    <recommendedName>
        <fullName>L-lactate dehydrogenase A chain</fullName>
        <shortName>LDH-A</shortName>
        <ecNumber evidence="2">1.1.1.27</ecNumber>
    </recommendedName>
</protein>
<gene>
    <name type="primary">ldha</name>
</gene>
<sequence length="332" mass="36235">MSTKEKLISHVSKEEAVGSRNKVTVVGVGMVGMASAISILLKDLCDELALVDVMEDKLKGEVMDLQHGSLFLKTHKIVADKDYSVTANSRVVVVTAGARQQEGESRLNLVQRNVNIFKFIIPNIVKYSPNCILMVVSNPVDILTYVAWKLSGFPRHRVIGSGTNLDSARFRHIMGEKLHLHPSSCHGWIVGEHGDSSVPVWSGVNVAGVSLQTLNPKMGAEGDSENWKAVHKMVVDGAYEVIKLKGYTSWAIGMSVADLVESIVKNLHKVHPVSTLVKGMHGVKDEVFLSVPCVLGNSGLTDVIHMTLKADEEKQLVKSAETLWGVQKELTL</sequence>
<evidence type="ECO:0000250" key="1"/>
<evidence type="ECO:0000250" key="2">
    <source>
        <dbReference type="UniProtKB" id="P00338"/>
    </source>
</evidence>
<evidence type="ECO:0000305" key="3"/>
<name>LDHA_GILSE</name>
<accession>P69084</accession>
<accession>O93620</accession>
<comment type="function">
    <text evidence="2">Interconverts simultaneously and stereospecifically pyruvate and lactate with concomitant interconversion of NADH and NAD(+).</text>
</comment>
<comment type="catalytic activity">
    <reaction evidence="2">
        <text>(S)-lactate + NAD(+) = pyruvate + NADH + H(+)</text>
        <dbReference type="Rhea" id="RHEA:23444"/>
        <dbReference type="ChEBI" id="CHEBI:15361"/>
        <dbReference type="ChEBI" id="CHEBI:15378"/>
        <dbReference type="ChEBI" id="CHEBI:16651"/>
        <dbReference type="ChEBI" id="CHEBI:57540"/>
        <dbReference type="ChEBI" id="CHEBI:57945"/>
        <dbReference type="EC" id="1.1.1.27"/>
    </reaction>
    <physiologicalReaction direction="left-to-right" evidence="2">
        <dbReference type="Rhea" id="RHEA:23445"/>
    </physiologicalReaction>
    <physiologicalReaction direction="right-to-left" evidence="2">
        <dbReference type="Rhea" id="RHEA:23446"/>
    </physiologicalReaction>
</comment>
<comment type="pathway">
    <text evidence="2">Fermentation; pyruvate fermentation to lactate; (S)-lactate from pyruvate: step 1/1.</text>
</comment>
<comment type="subunit">
    <text evidence="1">Homotetramer.</text>
</comment>
<comment type="subcellular location">
    <subcellularLocation>
        <location evidence="1">Cytoplasm</location>
    </subcellularLocation>
</comment>
<comment type="similarity">
    <text evidence="3">Belongs to the LDH/MDH superfamily. LDH family.</text>
</comment>
<reference key="1">
    <citation type="journal article" date="1997" name="J. Exp. Biol.">
        <title>Amino acid sequence differences cannot fully explain interspecific variation in thermal sensitivities of gobiid fish A4-lactate dehydrogenases (A4-LDHs).</title>
        <authorList>
            <person name="Fields P."/>
            <person name="Somero G."/>
        </authorList>
    </citation>
    <scope>NUCLEOTIDE SEQUENCE [MRNA]</scope>
    <source>
        <tissue>Muscle</tissue>
    </source>
</reference>